<dbReference type="EC" id="3.4.16.6"/>
<dbReference type="EMBL" id="DS028120">
    <property type="protein sequence ID" value="EEY63734.1"/>
    <property type="molecule type" value="Genomic_DNA"/>
</dbReference>
<dbReference type="RefSeq" id="XP_002907170.1">
    <property type="nucleotide sequence ID" value="XM_002907124.1"/>
</dbReference>
<dbReference type="SMR" id="D0MVS1"/>
<dbReference type="ESTHER" id="phyit-kex1">
    <property type="family name" value="Carboxypeptidase_S10"/>
</dbReference>
<dbReference type="MEROPS" id="S10.A68"/>
<dbReference type="GlyCosmos" id="D0MVS1">
    <property type="glycosylation" value="4 sites, No reported glycans"/>
</dbReference>
<dbReference type="EnsemblProtists" id="PITG_02213T0">
    <property type="protein sequence ID" value="PITG_02213T0"/>
    <property type="gene ID" value="PITG_02213"/>
</dbReference>
<dbReference type="GeneID" id="9469606"/>
<dbReference type="KEGG" id="pif:PITG_02213"/>
<dbReference type="VEuPathDB" id="FungiDB:PITG_02213"/>
<dbReference type="eggNOG" id="KOG1282">
    <property type="taxonomic scope" value="Eukaryota"/>
</dbReference>
<dbReference type="HOGENOM" id="CLU_008523_11_3_1"/>
<dbReference type="InParanoid" id="D0MVS1"/>
<dbReference type="OMA" id="EMADQFV"/>
<dbReference type="OrthoDB" id="192887at2759"/>
<dbReference type="Proteomes" id="UP000006643">
    <property type="component" value="Partially assembled WGS sequence"/>
</dbReference>
<dbReference type="GO" id="GO:0005794">
    <property type="term" value="C:Golgi apparatus"/>
    <property type="evidence" value="ECO:0007669"/>
    <property type="project" value="UniProtKB-SubCell"/>
</dbReference>
<dbReference type="GO" id="GO:0016020">
    <property type="term" value="C:membrane"/>
    <property type="evidence" value="ECO:0007669"/>
    <property type="project" value="UniProtKB-KW"/>
</dbReference>
<dbReference type="GO" id="GO:0004185">
    <property type="term" value="F:serine-type carboxypeptidase activity"/>
    <property type="evidence" value="ECO:0007669"/>
    <property type="project" value="UniProtKB-EC"/>
</dbReference>
<dbReference type="GO" id="GO:0006508">
    <property type="term" value="P:proteolysis"/>
    <property type="evidence" value="ECO:0007669"/>
    <property type="project" value="UniProtKB-KW"/>
</dbReference>
<dbReference type="FunFam" id="3.40.50.1820:FF:000662">
    <property type="entry name" value="Carboxypeptidase"/>
    <property type="match status" value="1"/>
</dbReference>
<dbReference type="Gene3D" id="3.40.50.1820">
    <property type="entry name" value="alpha/beta hydrolase"/>
    <property type="match status" value="1"/>
</dbReference>
<dbReference type="InterPro" id="IPR029058">
    <property type="entry name" value="AB_hydrolase_fold"/>
</dbReference>
<dbReference type="InterPro" id="IPR001563">
    <property type="entry name" value="Peptidase_S10"/>
</dbReference>
<dbReference type="InterPro" id="IPR033124">
    <property type="entry name" value="Ser_caboxypep_his_AS"/>
</dbReference>
<dbReference type="PANTHER" id="PTHR11802:SF3">
    <property type="entry name" value="RETINOID-INDUCIBLE SERINE CARBOXYPEPTIDASE"/>
    <property type="match status" value="1"/>
</dbReference>
<dbReference type="PANTHER" id="PTHR11802">
    <property type="entry name" value="SERINE PROTEASE FAMILY S10 SERINE CARBOXYPEPTIDASE"/>
    <property type="match status" value="1"/>
</dbReference>
<dbReference type="Pfam" id="PF00450">
    <property type="entry name" value="Peptidase_S10"/>
    <property type="match status" value="1"/>
</dbReference>
<dbReference type="PRINTS" id="PR00724">
    <property type="entry name" value="CRBOXYPTASEC"/>
</dbReference>
<dbReference type="SUPFAM" id="SSF53474">
    <property type="entry name" value="alpha/beta-Hydrolases"/>
    <property type="match status" value="1"/>
</dbReference>
<dbReference type="PROSITE" id="PS00560">
    <property type="entry name" value="CARBOXYPEPT_SER_HIS"/>
    <property type="match status" value="1"/>
</dbReference>
<comment type="function">
    <text evidence="1">Protease with a carboxypeptidase B-like function involved in the C-terminal processing of the lysine and arginine residues from protein precursors. Promotes cell fusion and is involved in the programmed cell death (By similarity).</text>
</comment>
<comment type="catalytic activity">
    <reaction>
        <text>Preferential release of a C-terminal arginine or lysine residue.</text>
        <dbReference type="EC" id="3.4.16.6"/>
    </reaction>
</comment>
<comment type="subcellular location">
    <subcellularLocation>
        <location evidence="1">Golgi apparatus</location>
        <location evidence="1">trans-Golgi network membrane</location>
        <topology evidence="1">Single-pass type I membrane protein</topology>
    </subcellularLocation>
</comment>
<comment type="similarity">
    <text evidence="4">Belongs to the peptidase S10 family.</text>
</comment>
<accession>D0MVS1</accession>
<proteinExistence type="inferred from homology"/>
<gene>
    <name type="primary">KEX1</name>
    <name type="ORF">PITG_02213</name>
</gene>
<protein>
    <recommendedName>
        <fullName>Pheromone-processing carboxypeptidase KEX1</fullName>
        <ecNumber>3.4.16.6</ecNumber>
    </recommendedName>
    <alternativeName>
        <fullName>Carboxypeptidase D</fullName>
    </alternativeName>
</protein>
<keyword id="KW-0053">Apoptosis</keyword>
<keyword id="KW-0121">Carboxypeptidase</keyword>
<keyword id="KW-0325">Glycoprotein</keyword>
<keyword id="KW-0333">Golgi apparatus</keyword>
<keyword id="KW-0378">Hydrolase</keyword>
<keyword id="KW-0472">Membrane</keyword>
<keyword id="KW-0645">Protease</keyword>
<keyword id="KW-1185">Reference proteome</keyword>
<keyword id="KW-0732">Signal</keyword>
<keyword id="KW-0812">Transmembrane</keyword>
<keyword id="KW-1133">Transmembrane helix</keyword>
<reference key="1">
    <citation type="journal article" date="2009" name="Nature">
        <title>Genome sequence and analysis of the Irish potato famine pathogen Phytophthora infestans.</title>
        <authorList>
            <consortium name="The Broad Institute Genome Sequencing Platform"/>
            <person name="Haas B.J."/>
            <person name="Kamoun S."/>
            <person name="Zody M.C."/>
            <person name="Jiang R.H."/>
            <person name="Handsaker R.E."/>
            <person name="Cano L.M."/>
            <person name="Grabherr M."/>
            <person name="Kodira C.D."/>
            <person name="Raffaele S."/>
            <person name="Torto-Alalibo T."/>
            <person name="Bozkurt T.O."/>
            <person name="Ah-Fong A.M."/>
            <person name="Alvarado L."/>
            <person name="Anderson V.L."/>
            <person name="Armstrong M.R."/>
            <person name="Avrova A."/>
            <person name="Baxter L."/>
            <person name="Beynon J."/>
            <person name="Boevink P.C."/>
            <person name="Bollmann S.R."/>
            <person name="Bos J.I."/>
            <person name="Bulone V."/>
            <person name="Cai G."/>
            <person name="Cakir C."/>
            <person name="Carrington J.C."/>
            <person name="Chawner M."/>
            <person name="Conti L."/>
            <person name="Costanzo S."/>
            <person name="Ewan R."/>
            <person name="Fahlgren N."/>
            <person name="Fischbach M.A."/>
            <person name="Fugelstad J."/>
            <person name="Gilroy E.M."/>
            <person name="Gnerre S."/>
            <person name="Green P.J."/>
            <person name="Grenville-Briggs L.J."/>
            <person name="Griffith J."/>
            <person name="Grunwald N.J."/>
            <person name="Horn K."/>
            <person name="Horner N.R."/>
            <person name="Hu C.H."/>
            <person name="Huitema E."/>
            <person name="Jeong D.H."/>
            <person name="Jones A.M."/>
            <person name="Jones J.D."/>
            <person name="Jones R.W."/>
            <person name="Karlsson E.K."/>
            <person name="Kunjeti S.G."/>
            <person name="Lamour K."/>
            <person name="Liu Z."/>
            <person name="Ma L."/>
            <person name="Maclean D."/>
            <person name="Chibucos M.C."/>
            <person name="McDonald H."/>
            <person name="McWalters J."/>
            <person name="Meijer H.J."/>
            <person name="Morgan W."/>
            <person name="Morris P.F."/>
            <person name="Munro C.A."/>
            <person name="O'Neill K."/>
            <person name="Ospina-Giraldo M."/>
            <person name="Pinzon A."/>
            <person name="Pritchard L."/>
            <person name="Ramsahoye B."/>
            <person name="Ren Q."/>
            <person name="Restrepo S."/>
            <person name="Roy S."/>
            <person name="Sadanandom A."/>
            <person name="Savidor A."/>
            <person name="Schornack S."/>
            <person name="Schwartz D.C."/>
            <person name="Schumann U.D."/>
            <person name="Schwessinger B."/>
            <person name="Seyer L."/>
            <person name="Sharpe T."/>
            <person name="Silvar C."/>
            <person name="Song J."/>
            <person name="Studholme D.J."/>
            <person name="Sykes S."/>
            <person name="Thines M."/>
            <person name="van de Vondervoort P.J."/>
            <person name="Phuntumart V."/>
            <person name="Wawra S."/>
            <person name="Weide R."/>
            <person name="Win J."/>
            <person name="Young C."/>
            <person name="Zhou S."/>
            <person name="Fry W."/>
            <person name="Meyers B.C."/>
            <person name="van West P."/>
            <person name="Ristaino J."/>
            <person name="Govers F."/>
            <person name="Birch P.R."/>
            <person name="Whisson S.C."/>
            <person name="Judelson H.S."/>
            <person name="Nusbaum C."/>
        </authorList>
    </citation>
    <scope>NUCLEOTIDE SEQUENCE [LARGE SCALE GENOMIC DNA]</scope>
    <source>
        <strain>T30-4</strain>
    </source>
</reference>
<evidence type="ECO:0000250" key="1"/>
<evidence type="ECO:0000255" key="2"/>
<evidence type="ECO:0000255" key="3">
    <source>
        <dbReference type="PROSITE-ProRule" id="PRU10075"/>
    </source>
</evidence>
<evidence type="ECO:0000305" key="4"/>
<organism>
    <name type="scientific">Phytophthora infestans (strain T30-4)</name>
    <name type="common">Potato late blight agent</name>
    <dbReference type="NCBI Taxonomy" id="403677"/>
    <lineage>
        <taxon>Eukaryota</taxon>
        <taxon>Sar</taxon>
        <taxon>Stramenopiles</taxon>
        <taxon>Oomycota</taxon>
        <taxon>Peronosporales</taxon>
        <taxon>Peronosporaceae</taxon>
        <taxon>Phytophthora</taxon>
    </lineage>
</organism>
<feature type="signal peptide" evidence="2">
    <location>
        <begin position="1"/>
        <end position="18"/>
    </location>
</feature>
<feature type="chain" id="PRO_0000411936" description="Pheromone-processing carboxypeptidase KEX1">
    <location>
        <begin position="19"/>
        <end position="597"/>
    </location>
</feature>
<feature type="topological domain" description="Lumenal" evidence="2">
    <location>
        <begin position="19"/>
        <end position="508"/>
    </location>
</feature>
<feature type="transmembrane region" description="Helical" evidence="2">
    <location>
        <begin position="509"/>
        <end position="529"/>
    </location>
</feature>
<feature type="topological domain" description="Cytoplasmic" evidence="2">
    <location>
        <begin position="530"/>
        <end position="597"/>
    </location>
</feature>
<feature type="active site" evidence="3">
    <location>
        <position position="186"/>
    </location>
</feature>
<feature type="active site" evidence="3">
    <location>
        <position position="377"/>
    </location>
</feature>
<feature type="active site" evidence="3">
    <location>
        <position position="436"/>
    </location>
</feature>
<feature type="glycosylation site" description="N-linked (GlcNAc...) asparagine" evidence="2">
    <location>
        <position position="395"/>
    </location>
</feature>
<feature type="glycosylation site" description="N-linked (GlcNAc...) asparagine" evidence="2">
    <location>
        <position position="425"/>
    </location>
</feature>
<feature type="glycosylation site" description="N-linked (GlcNAc...) asparagine" evidence="2">
    <location>
        <position position="472"/>
    </location>
</feature>
<feature type="glycosylation site" description="N-linked (GlcNAc...) asparagine" evidence="2">
    <location>
        <position position="503"/>
    </location>
</feature>
<sequence>MVTRHVLAAALAGSMTSAQRLHPTSQRASDDLIQNLPGLDPAAKVTQHAGRIALHDNDKNKMFYWHFQAAQDPEKAPLVIWLNGGPGCTSMQGLFLGNSPFTLKDDSTIGKNEHSWHEFANLLFVDQPIGTGMSYTKGNDYRLDEETIAQDFYEFLTKFLQRHNKYLSDGDDGVSNSRAVYMFGESHAGRWIPEFSDHIMKQNNDPKNQIKINLDGVGIGNGWVHPRIQYEYSDYAHGLGLLTFGQVRSLKASYAECLAALDAGTYYSRSCLDNMDSITGSVKPGNGGNSLNFYDVRQYLRNVGSYPSGQSNIAKYMNKMEVRKAVHGNEDKNFRFDLCSNGVFRALSKFDGVSTLDKVESLLQQGLRMIFYNGQWDMMCNHYGTEKLLLNLNWNGSDAYQQADKYTWRVQGRKEPAGFAQQGGNLTYLVVTGAGHMVPMDVPDVAADILRRFVNRLEFNDKVQTVVTTRLNATDMEVSFCYSPSVSADPDTSLSTRDQTGANSSQVHIGIAWLWVALVIAVVSSVLAVCVTIVCIRNKRNGKQEHEMITQVSDDEEVNQIEDESEEGFSDEDVGVHVLVSNVSQRATSPRSRVTEV</sequence>
<name>KEX1_PHYIT</name>